<evidence type="ECO:0000255" key="1">
    <source>
        <dbReference type="HAMAP-Rule" id="MF_00358"/>
    </source>
</evidence>
<evidence type="ECO:0000305" key="2"/>
<organism>
    <name type="scientific">Neisseria meningitidis serogroup C (strain 053442)</name>
    <dbReference type="NCBI Taxonomy" id="374833"/>
    <lineage>
        <taxon>Bacteria</taxon>
        <taxon>Pseudomonadati</taxon>
        <taxon>Pseudomonadota</taxon>
        <taxon>Betaproteobacteria</taxon>
        <taxon>Neisseriales</taxon>
        <taxon>Neisseriaceae</taxon>
        <taxon>Neisseria</taxon>
    </lineage>
</organism>
<feature type="chain" id="PRO_1000079413" description="Small ribosomal subunit protein bS21">
    <location>
        <begin position="1"/>
        <end position="70"/>
    </location>
</feature>
<gene>
    <name evidence="1" type="primary">rpsU</name>
    <name type="ordered locus">NMCC_0266</name>
</gene>
<accession>A9M105</accession>
<proteinExistence type="inferred from homology"/>
<keyword id="KW-0687">Ribonucleoprotein</keyword>
<keyword id="KW-0689">Ribosomal protein</keyword>
<name>RS21_NEIM0</name>
<protein>
    <recommendedName>
        <fullName evidence="1">Small ribosomal subunit protein bS21</fullName>
    </recommendedName>
    <alternativeName>
        <fullName evidence="2">30S ribosomal protein S21</fullName>
    </alternativeName>
</protein>
<reference key="1">
    <citation type="journal article" date="2008" name="Genomics">
        <title>Characterization of ST-4821 complex, a unique Neisseria meningitidis clone.</title>
        <authorList>
            <person name="Peng J."/>
            <person name="Yang L."/>
            <person name="Yang F."/>
            <person name="Yang J."/>
            <person name="Yan Y."/>
            <person name="Nie H."/>
            <person name="Zhang X."/>
            <person name="Xiong Z."/>
            <person name="Jiang Y."/>
            <person name="Cheng F."/>
            <person name="Xu X."/>
            <person name="Chen S."/>
            <person name="Sun L."/>
            <person name="Li W."/>
            <person name="Shen Y."/>
            <person name="Shao Z."/>
            <person name="Liang X."/>
            <person name="Xu J."/>
            <person name="Jin Q."/>
        </authorList>
    </citation>
    <scope>NUCLEOTIDE SEQUENCE [LARGE SCALE GENOMIC DNA]</scope>
    <source>
        <strain>053442</strain>
    </source>
</reference>
<comment type="similarity">
    <text evidence="1">Belongs to the bacterial ribosomal protein bS21 family.</text>
</comment>
<dbReference type="EMBL" id="CP000381">
    <property type="protein sequence ID" value="ABX72474.1"/>
    <property type="molecule type" value="Genomic_DNA"/>
</dbReference>
<dbReference type="RefSeq" id="WP_002214819.1">
    <property type="nucleotide sequence ID" value="NC_010120.1"/>
</dbReference>
<dbReference type="SMR" id="A9M105"/>
<dbReference type="GeneID" id="93386856"/>
<dbReference type="KEGG" id="nmn:NMCC_0266"/>
<dbReference type="HOGENOM" id="CLU_159258_1_1_4"/>
<dbReference type="Proteomes" id="UP000001177">
    <property type="component" value="Chromosome"/>
</dbReference>
<dbReference type="GO" id="GO:1990904">
    <property type="term" value="C:ribonucleoprotein complex"/>
    <property type="evidence" value="ECO:0007669"/>
    <property type="project" value="UniProtKB-KW"/>
</dbReference>
<dbReference type="GO" id="GO:0005840">
    <property type="term" value="C:ribosome"/>
    <property type="evidence" value="ECO:0007669"/>
    <property type="project" value="UniProtKB-KW"/>
</dbReference>
<dbReference type="GO" id="GO:0003735">
    <property type="term" value="F:structural constituent of ribosome"/>
    <property type="evidence" value="ECO:0007669"/>
    <property type="project" value="InterPro"/>
</dbReference>
<dbReference type="GO" id="GO:0006412">
    <property type="term" value="P:translation"/>
    <property type="evidence" value="ECO:0007669"/>
    <property type="project" value="UniProtKB-UniRule"/>
</dbReference>
<dbReference type="Gene3D" id="1.20.5.1150">
    <property type="entry name" value="Ribosomal protein S8"/>
    <property type="match status" value="1"/>
</dbReference>
<dbReference type="HAMAP" id="MF_00358">
    <property type="entry name" value="Ribosomal_bS21"/>
    <property type="match status" value="1"/>
</dbReference>
<dbReference type="InterPro" id="IPR001911">
    <property type="entry name" value="Ribosomal_bS21"/>
</dbReference>
<dbReference type="InterPro" id="IPR038380">
    <property type="entry name" value="Ribosomal_bS21_sf"/>
</dbReference>
<dbReference type="NCBIfam" id="TIGR00030">
    <property type="entry name" value="S21p"/>
    <property type="match status" value="1"/>
</dbReference>
<dbReference type="PANTHER" id="PTHR21109">
    <property type="entry name" value="MITOCHONDRIAL 28S RIBOSOMAL PROTEIN S21"/>
    <property type="match status" value="1"/>
</dbReference>
<dbReference type="PANTHER" id="PTHR21109:SF22">
    <property type="entry name" value="SMALL RIBOSOMAL SUBUNIT PROTEIN BS21"/>
    <property type="match status" value="1"/>
</dbReference>
<dbReference type="Pfam" id="PF01165">
    <property type="entry name" value="Ribosomal_S21"/>
    <property type="match status" value="1"/>
</dbReference>
<dbReference type="PRINTS" id="PR00976">
    <property type="entry name" value="RIBOSOMALS21"/>
</dbReference>
<sequence length="70" mass="8355">MPAIRVKENEPFEVAMRRFKRAVEKTGLLTELRAREAYEKPTTERKRKKAAAVKRLQKRLRSQQLPPKMY</sequence>